<proteinExistence type="evidence at transcript level"/>
<accession>Q5ZHN5</accession>
<evidence type="ECO:0000250" key="1"/>
<evidence type="ECO:0000255" key="2"/>
<evidence type="ECO:0000255" key="3">
    <source>
        <dbReference type="PROSITE-ProRule" id="PRU00309"/>
    </source>
</evidence>
<evidence type="ECO:0000256" key="4">
    <source>
        <dbReference type="SAM" id="MobiDB-lite"/>
    </source>
</evidence>
<reference key="1">
    <citation type="journal article" date="2005" name="Genome Biol.">
        <title>Full-length cDNAs from chicken bursal lymphocytes to facilitate gene function analysis.</title>
        <authorList>
            <person name="Caldwell R.B."/>
            <person name="Kierzek A.M."/>
            <person name="Arakawa H."/>
            <person name="Bezzubov Y."/>
            <person name="Zaim J."/>
            <person name="Fiedler P."/>
            <person name="Kutter S."/>
            <person name="Blagodatski A."/>
            <person name="Kostovska D."/>
            <person name="Koter M."/>
            <person name="Plachy J."/>
            <person name="Carninci P."/>
            <person name="Hayashizaki Y."/>
            <person name="Buerstedde J.-M."/>
        </authorList>
    </citation>
    <scope>NUCLEOTIDE SEQUENCE [LARGE SCALE MRNA]</scope>
    <source>
        <strain>CB</strain>
        <tissue>Bursa of Fabricius</tissue>
    </source>
</reference>
<sequence>MPRYCAASYCKNRGGQSARDQRKLSFYPFPLHDKERLEKWLRNMKRDAWTPSKHQLLCSDHFTPDSLDVRWGIRYLKHTAVPTIFSSPDDEEKGSSQNSPQEIRREDQEETTKNVESKKVPVSLELCTPKKSSVTAENPDKKAEVICSTVLSKSLQVQKLQLENREDFEADSIILDNSSQQHIHQPEPVLMAAAVQNVEATDVHASVEVPVSCTATVLQFSDPDYLNSSLKLKNTLGSITDYTLENPNSHVVGCSVEVQPATENAVLVNAVTQTIEQLSGSEESVIAIIVPAESPKEPEIINRSFLPIKQEFLDTEEAETDNSLHMNAYNGLEILQTEHSYCKQDIDREHLWQKISKLHSKITLLEMQEVKTLGRLRSLEALIGQLKQENLLSEEKLKIVENCFTTLEVTMIQ</sequence>
<protein>
    <recommendedName>
        <fullName>THAP domain-containing protein 5</fullName>
    </recommendedName>
</protein>
<organism>
    <name type="scientific">Gallus gallus</name>
    <name type="common">Chicken</name>
    <dbReference type="NCBI Taxonomy" id="9031"/>
    <lineage>
        <taxon>Eukaryota</taxon>
        <taxon>Metazoa</taxon>
        <taxon>Chordata</taxon>
        <taxon>Craniata</taxon>
        <taxon>Vertebrata</taxon>
        <taxon>Euteleostomi</taxon>
        <taxon>Archelosauria</taxon>
        <taxon>Archosauria</taxon>
        <taxon>Dinosauria</taxon>
        <taxon>Saurischia</taxon>
        <taxon>Theropoda</taxon>
        <taxon>Coelurosauria</taxon>
        <taxon>Aves</taxon>
        <taxon>Neognathae</taxon>
        <taxon>Galloanserae</taxon>
        <taxon>Galliformes</taxon>
        <taxon>Phasianidae</taxon>
        <taxon>Phasianinae</taxon>
        <taxon>Gallus</taxon>
    </lineage>
</organism>
<comment type="subcellular location">
    <subcellularLocation>
        <location evidence="1">Nucleus</location>
    </subcellularLocation>
</comment>
<name>THAP5_CHICK</name>
<keyword id="KW-0175">Coiled coil</keyword>
<keyword id="KW-0238">DNA-binding</keyword>
<keyword id="KW-0479">Metal-binding</keyword>
<keyword id="KW-0539">Nucleus</keyword>
<keyword id="KW-1185">Reference proteome</keyword>
<keyword id="KW-0862">Zinc</keyword>
<keyword id="KW-0863">Zinc-finger</keyword>
<gene>
    <name type="primary">THAP5</name>
    <name type="ORF">RCJMB04_35c20</name>
</gene>
<feature type="chain" id="PRO_0000333819" description="THAP domain-containing protein 5">
    <location>
        <begin position="1"/>
        <end position="413"/>
    </location>
</feature>
<feature type="zinc finger region" description="THAP-type" evidence="3">
    <location>
        <begin position="1"/>
        <end position="85"/>
    </location>
</feature>
<feature type="region of interest" description="Disordered" evidence="4">
    <location>
        <begin position="84"/>
        <end position="118"/>
    </location>
</feature>
<feature type="coiled-coil region" evidence="2">
    <location>
        <begin position="375"/>
        <end position="399"/>
    </location>
</feature>
<feature type="compositionally biased region" description="Basic and acidic residues" evidence="4">
    <location>
        <begin position="102"/>
        <end position="118"/>
    </location>
</feature>
<dbReference type="EMBL" id="AJ721099">
    <property type="protein sequence ID" value="CAG32758.1"/>
    <property type="molecule type" value="mRNA"/>
</dbReference>
<dbReference type="RefSeq" id="NP_001006230.1">
    <property type="nucleotide sequence ID" value="NM_001006230.1"/>
</dbReference>
<dbReference type="SMR" id="Q5ZHN5"/>
<dbReference type="FunCoup" id="Q5ZHN5">
    <property type="interactions" value="771"/>
</dbReference>
<dbReference type="STRING" id="9031.ENSGALP00000067701"/>
<dbReference type="PaxDb" id="9031-ENSGALP00000015440"/>
<dbReference type="GeneID" id="417784"/>
<dbReference type="KEGG" id="gga:417784"/>
<dbReference type="CTD" id="168451"/>
<dbReference type="VEuPathDB" id="HostDB:geneid_417784"/>
<dbReference type="eggNOG" id="ENOG502RYVM">
    <property type="taxonomic scope" value="Eukaryota"/>
</dbReference>
<dbReference type="InParanoid" id="Q5ZHN5"/>
<dbReference type="OrthoDB" id="5982876at2759"/>
<dbReference type="PhylomeDB" id="Q5ZHN5"/>
<dbReference type="PRO" id="PR:Q5ZHN5"/>
<dbReference type="Proteomes" id="UP000000539">
    <property type="component" value="Unassembled WGS sequence"/>
</dbReference>
<dbReference type="GO" id="GO:0005634">
    <property type="term" value="C:nucleus"/>
    <property type="evidence" value="ECO:0000318"/>
    <property type="project" value="GO_Central"/>
</dbReference>
<dbReference type="GO" id="GO:0003677">
    <property type="term" value="F:DNA binding"/>
    <property type="evidence" value="ECO:0007669"/>
    <property type="project" value="UniProtKB-KW"/>
</dbReference>
<dbReference type="GO" id="GO:0008270">
    <property type="term" value="F:zinc ion binding"/>
    <property type="evidence" value="ECO:0007669"/>
    <property type="project" value="UniProtKB-KW"/>
</dbReference>
<dbReference type="InterPro" id="IPR052224">
    <property type="entry name" value="THAP_domain_protein"/>
</dbReference>
<dbReference type="InterPro" id="IPR006612">
    <property type="entry name" value="THAP_Znf"/>
</dbReference>
<dbReference type="PANTHER" id="PTHR46927">
    <property type="entry name" value="AGAP005574-PA"/>
    <property type="match status" value="1"/>
</dbReference>
<dbReference type="PANTHER" id="PTHR46927:SF1">
    <property type="entry name" value="THAP DOMAIN-CONTAINING PROTEIN 5"/>
    <property type="match status" value="1"/>
</dbReference>
<dbReference type="Pfam" id="PF05485">
    <property type="entry name" value="THAP"/>
    <property type="match status" value="1"/>
</dbReference>
<dbReference type="SMART" id="SM00692">
    <property type="entry name" value="DM3"/>
    <property type="match status" value="1"/>
</dbReference>
<dbReference type="SMART" id="SM00980">
    <property type="entry name" value="THAP"/>
    <property type="match status" value="1"/>
</dbReference>
<dbReference type="SUPFAM" id="SSF57716">
    <property type="entry name" value="Glucocorticoid receptor-like (DNA-binding domain)"/>
    <property type="match status" value="1"/>
</dbReference>
<dbReference type="PROSITE" id="PS50950">
    <property type="entry name" value="ZF_THAP"/>
    <property type="match status" value="1"/>
</dbReference>